<accession>A5CC87</accession>
<reference key="1">
    <citation type="journal article" date="2007" name="Proc. Natl. Acad. Sci. U.S.A.">
        <title>The Orientia tsutsugamushi genome reveals massive proliferation of conjugative type IV secretion system and host-cell interaction genes.</title>
        <authorList>
            <person name="Cho N.-H."/>
            <person name="Kim H.-R."/>
            <person name="Lee J.-H."/>
            <person name="Kim S.-Y."/>
            <person name="Kim J."/>
            <person name="Cha S."/>
            <person name="Kim S.-Y."/>
            <person name="Darby A.C."/>
            <person name="Fuxelius H.-H."/>
            <person name="Yin J."/>
            <person name="Kim J.H."/>
            <person name="Kim J."/>
            <person name="Lee S.J."/>
            <person name="Koh Y.-S."/>
            <person name="Jang W.-J."/>
            <person name="Park K.-H."/>
            <person name="Andersson S.G.E."/>
            <person name="Choi M.-S."/>
            <person name="Kim I.-S."/>
        </authorList>
    </citation>
    <scope>NUCLEOTIDE SEQUENCE [LARGE SCALE GENOMIC DNA]</scope>
    <source>
        <strain>Boryong</strain>
    </source>
</reference>
<proteinExistence type="inferred from homology"/>
<dbReference type="EMBL" id="AM494475">
    <property type="protein sequence ID" value="CAM79268.1"/>
    <property type="molecule type" value="Genomic_DNA"/>
</dbReference>
<dbReference type="RefSeq" id="WP_011944326.1">
    <property type="nucleotide sequence ID" value="NC_009488.1"/>
</dbReference>
<dbReference type="SMR" id="A5CC87"/>
<dbReference type="KEGG" id="ots:OTBS_0202"/>
<dbReference type="eggNOG" id="COG0227">
    <property type="taxonomic scope" value="Bacteria"/>
</dbReference>
<dbReference type="HOGENOM" id="CLU_064548_4_2_5"/>
<dbReference type="Proteomes" id="UP000001565">
    <property type="component" value="Chromosome"/>
</dbReference>
<dbReference type="GO" id="GO:0022625">
    <property type="term" value="C:cytosolic large ribosomal subunit"/>
    <property type="evidence" value="ECO:0007669"/>
    <property type="project" value="TreeGrafter"/>
</dbReference>
<dbReference type="GO" id="GO:0003735">
    <property type="term" value="F:structural constituent of ribosome"/>
    <property type="evidence" value="ECO:0007669"/>
    <property type="project" value="InterPro"/>
</dbReference>
<dbReference type="GO" id="GO:0006412">
    <property type="term" value="P:translation"/>
    <property type="evidence" value="ECO:0007669"/>
    <property type="project" value="UniProtKB-UniRule"/>
</dbReference>
<dbReference type="Gene3D" id="2.30.170.40">
    <property type="entry name" value="Ribosomal protein L28/L24"/>
    <property type="match status" value="1"/>
</dbReference>
<dbReference type="HAMAP" id="MF_00373">
    <property type="entry name" value="Ribosomal_bL28"/>
    <property type="match status" value="1"/>
</dbReference>
<dbReference type="InterPro" id="IPR026569">
    <property type="entry name" value="Ribosomal_bL28"/>
</dbReference>
<dbReference type="InterPro" id="IPR034704">
    <property type="entry name" value="Ribosomal_bL28/bL31-like_sf"/>
</dbReference>
<dbReference type="InterPro" id="IPR001383">
    <property type="entry name" value="Ribosomal_bL28_bact-type"/>
</dbReference>
<dbReference type="InterPro" id="IPR037147">
    <property type="entry name" value="Ribosomal_bL28_sf"/>
</dbReference>
<dbReference type="NCBIfam" id="TIGR00009">
    <property type="entry name" value="L28"/>
    <property type="match status" value="1"/>
</dbReference>
<dbReference type="PANTHER" id="PTHR13528">
    <property type="entry name" value="39S RIBOSOMAL PROTEIN L28, MITOCHONDRIAL"/>
    <property type="match status" value="1"/>
</dbReference>
<dbReference type="PANTHER" id="PTHR13528:SF2">
    <property type="entry name" value="LARGE RIBOSOMAL SUBUNIT PROTEIN BL28M"/>
    <property type="match status" value="1"/>
</dbReference>
<dbReference type="Pfam" id="PF00830">
    <property type="entry name" value="Ribosomal_L28"/>
    <property type="match status" value="1"/>
</dbReference>
<dbReference type="SUPFAM" id="SSF143800">
    <property type="entry name" value="L28p-like"/>
    <property type="match status" value="1"/>
</dbReference>
<comment type="similarity">
    <text evidence="1">Belongs to the bacterial ribosomal protein bL28 family.</text>
</comment>
<keyword id="KW-1185">Reference proteome</keyword>
<keyword id="KW-0687">Ribonucleoprotein</keyword>
<keyword id="KW-0689">Ribosomal protein</keyword>
<feature type="chain" id="PRO_1000007293" description="Large ribosomal subunit protein bL28">
    <location>
        <begin position="1"/>
        <end position="96"/>
    </location>
</feature>
<evidence type="ECO:0000255" key="1">
    <source>
        <dbReference type="HAMAP-Rule" id="MF_00373"/>
    </source>
</evidence>
<evidence type="ECO:0000305" key="2"/>
<gene>
    <name evidence="1" type="primary">rpmB</name>
    <name type="ordered locus">OTBS_0202</name>
</gene>
<organism>
    <name type="scientific">Orientia tsutsugamushi (strain Boryong)</name>
    <name type="common">Rickettsia tsutsugamushi</name>
    <dbReference type="NCBI Taxonomy" id="357244"/>
    <lineage>
        <taxon>Bacteria</taxon>
        <taxon>Pseudomonadati</taxon>
        <taxon>Pseudomonadota</taxon>
        <taxon>Alphaproteobacteria</taxon>
        <taxon>Rickettsiales</taxon>
        <taxon>Rickettsiaceae</taxon>
        <taxon>Rickettsieae</taxon>
        <taxon>Orientia</taxon>
    </lineage>
</organism>
<name>RL28_ORITB</name>
<protein>
    <recommendedName>
        <fullName evidence="1">Large ribosomal subunit protein bL28</fullName>
    </recommendedName>
    <alternativeName>
        <fullName evidence="2">50S ribosomal protein L28</fullName>
    </alternativeName>
</protein>
<sequence>MSRVCELTGVSVQSGHNVSHSQRKTKRKFLPNLQNVSLFSDSLKKAFKFKVVARAIRTLDKVGGLDCYLLSASDKILSKFAIEVKKIIKNNGSKSS</sequence>